<feature type="chain" id="PRO_1000204690" description="tRNA(Phe) 7-((3-amino-3-carboxypropyl)-4-demethylwyosine(37)-N(4))-methyltransferase">
    <location>
        <begin position="1"/>
        <end position="197"/>
    </location>
</feature>
<sequence length="197" mass="22596">MFLYEKNFDLQKKKALESLNDALEKGLVDSDIISLLNKINSLKNYFTTSSCSGRISIMQMPDLGDKLNAIWLGKWHREVKIEEVLDTINKHDGGMLWFMVHSPILHVSAKTLEDAVELLNLAMACGFKHSNIKSVSHKKLVVEIRSTERMDIPLGSDGELWVNESYLVKIVSMANLQLRRTKEKLRKLEDEIQKLKK</sequence>
<accession>C6A5A3</accession>
<keyword id="KW-0489">Methyltransferase</keyword>
<keyword id="KW-1185">Reference proteome</keyword>
<keyword id="KW-0949">S-adenosyl-L-methionine</keyword>
<keyword id="KW-0808">Transferase</keyword>
<keyword id="KW-0819">tRNA processing</keyword>
<gene>
    <name evidence="1" type="primary">taw3</name>
    <name type="ordered locus">TSIB_1747</name>
</gene>
<proteinExistence type="inferred from homology"/>
<name>TYW3_THESM</name>
<reference key="1">
    <citation type="journal article" date="2009" name="Appl. Environ. Microbiol.">
        <title>Metabolic versatility and indigenous origin of the archaeon Thermococcus sibiricus, isolated from a siberian oil reservoir, as revealed by genome analysis.</title>
        <authorList>
            <person name="Mardanov A.V."/>
            <person name="Ravin N.V."/>
            <person name="Svetlitchnyi V.A."/>
            <person name="Beletsky A.V."/>
            <person name="Miroshnichenko M.L."/>
            <person name="Bonch-Osmolovskaya E.A."/>
            <person name="Skryabin K.G."/>
        </authorList>
    </citation>
    <scope>NUCLEOTIDE SEQUENCE [LARGE SCALE GENOMIC DNA]</scope>
    <source>
        <strain>DSM 12597 / MM 739</strain>
    </source>
</reference>
<comment type="function">
    <text evidence="1">S-adenosyl-L-methionine-dependent methyltransferase that acts as a component of the wyosine derivatives biosynthesis pathway. Probably methylates N-4 position of wybutosine-86 to produce wybutosine-72.</text>
</comment>
<comment type="catalytic activity">
    <reaction evidence="1">
        <text>4-demethyl-7-[(3S)-3-amino-3-carboxypropyl]wyosine(37) in tRNA(Phe) + S-adenosyl-L-methionine = 7-[(3S)-3-amino-3-carboxypropyl]wyosine(37) in tRNA(Phe) + S-adenosyl-L-homocysteine + H(+)</text>
        <dbReference type="Rhea" id="RHEA:36635"/>
        <dbReference type="Rhea" id="RHEA-COMP:10378"/>
        <dbReference type="Rhea" id="RHEA-COMP:10379"/>
        <dbReference type="ChEBI" id="CHEBI:15378"/>
        <dbReference type="ChEBI" id="CHEBI:57856"/>
        <dbReference type="ChEBI" id="CHEBI:59789"/>
        <dbReference type="ChEBI" id="CHEBI:73543"/>
        <dbReference type="ChEBI" id="CHEBI:73550"/>
        <dbReference type="EC" id="2.1.1.282"/>
    </reaction>
</comment>
<comment type="similarity">
    <text evidence="1">Belongs to the TYW3 family.</text>
</comment>
<organism>
    <name type="scientific">Thermococcus sibiricus (strain DSM 12597 / MM 739)</name>
    <dbReference type="NCBI Taxonomy" id="604354"/>
    <lineage>
        <taxon>Archaea</taxon>
        <taxon>Methanobacteriati</taxon>
        <taxon>Methanobacteriota</taxon>
        <taxon>Thermococci</taxon>
        <taxon>Thermococcales</taxon>
        <taxon>Thermococcaceae</taxon>
        <taxon>Thermococcus</taxon>
    </lineage>
</organism>
<protein>
    <recommendedName>
        <fullName evidence="1">tRNA(Phe) 7-((3-amino-3-carboxypropyl)-4-demethylwyosine(37)-N(4))-methyltransferase</fullName>
        <ecNumber evidence="1">2.1.1.282</ecNumber>
    </recommendedName>
    <alternativeName>
        <fullName evidence="1">tRNA wyosine derivatives biosynthesis protein Taw3</fullName>
    </alternativeName>
</protein>
<evidence type="ECO:0000255" key="1">
    <source>
        <dbReference type="HAMAP-Rule" id="MF_00266"/>
    </source>
</evidence>
<dbReference type="EC" id="2.1.1.282" evidence="1"/>
<dbReference type="EMBL" id="CP001463">
    <property type="protein sequence ID" value="ACS90798.1"/>
    <property type="molecule type" value="Genomic_DNA"/>
</dbReference>
<dbReference type="RefSeq" id="WP_015850014.1">
    <property type="nucleotide sequence ID" value="NC_012883.1"/>
</dbReference>
<dbReference type="SMR" id="C6A5A3"/>
<dbReference type="STRING" id="604354.TSIB_1747"/>
<dbReference type="GeneID" id="8096757"/>
<dbReference type="KEGG" id="tsi:TSIB_1747"/>
<dbReference type="eggNOG" id="arCOG04156">
    <property type="taxonomic scope" value="Archaea"/>
</dbReference>
<dbReference type="HOGENOM" id="CLU_047426_2_0_2"/>
<dbReference type="OrthoDB" id="19299at2157"/>
<dbReference type="Proteomes" id="UP000009079">
    <property type="component" value="Chromosome"/>
</dbReference>
<dbReference type="GO" id="GO:0008175">
    <property type="term" value="F:tRNA methyltransferase activity"/>
    <property type="evidence" value="ECO:0007669"/>
    <property type="project" value="InterPro"/>
</dbReference>
<dbReference type="GO" id="GO:0030488">
    <property type="term" value="P:tRNA methylation"/>
    <property type="evidence" value="ECO:0007669"/>
    <property type="project" value="InterPro"/>
</dbReference>
<dbReference type="GO" id="GO:0031591">
    <property type="term" value="P:wybutosine biosynthetic process"/>
    <property type="evidence" value="ECO:0007669"/>
    <property type="project" value="InterPro"/>
</dbReference>
<dbReference type="FunFam" id="3.30.1960.10:FF:000010">
    <property type="entry name" value="tRNA(Phe) 7-((3-amino-3-carboxypropyl)-4-demethylwyosine(37)-N(4))-methyltransferase 1"/>
    <property type="match status" value="1"/>
</dbReference>
<dbReference type="Gene3D" id="3.30.1960.10">
    <property type="entry name" value="tRNA wybutosine-synthesizing-like"/>
    <property type="match status" value="1"/>
</dbReference>
<dbReference type="HAMAP" id="MF_00266">
    <property type="entry name" value="TYW3_archaea"/>
    <property type="match status" value="1"/>
</dbReference>
<dbReference type="InterPro" id="IPR022908">
    <property type="entry name" value="Taw3"/>
</dbReference>
<dbReference type="InterPro" id="IPR003827">
    <property type="entry name" value="tRNA_yW-synthesising"/>
</dbReference>
<dbReference type="InterPro" id="IPR036602">
    <property type="entry name" value="tRNA_yW-synthesising-like_sf"/>
</dbReference>
<dbReference type="NCBIfam" id="NF003266">
    <property type="entry name" value="PRK04235.1-5"/>
    <property type="match status" value="1"/>
</dbReference>
<dbReference type="NCBIfam" id="NF003267">
    <property type="entry name" value="PRK04235.1-6"/>
    <property type="match status" value="1"/>
</dbReference>
<dbReference type="NCBIfam" id="NF047731">
    <property type="entry name" value="tRNAMtaseTaw3"/>
    <property type="match status" value="1"/>
</dbReference>
<dbReference type="PANTHER" id="PTHR48418">
    <property type="entry name" value="TRNA WYBUTOSINE-SYNTHESIZING PROTEIN 3"/>
    <property type="match status" value="1"/>
</dbReference>
<dbReference type="PANTHER" id="PTHR48418:SF1">
    <property type="entry name" value="TRNA WYBUTOSINE-SYNTHESIZING PROTEIN 3"/>
    <property type="match status" value="1"/>
</dbReference>
<dbReference type="Pfam" id="PF02676">
    <property type="entry name" value="TYW3"/>
    <property type="match status" value="1"/>
</dbReference>
<dbReference type="SUPFAM" id="SSF111278">
    <property type="entry name" value="SSo0622-like"/>
    <property type="match status" value="1"/>
</dbReference>